<gene>
    <name evidence="1" type="primary">rpsP</name>
    <name type="ordered locus">Pden_3881</name>
</gene>
<feature type="chain" id="PRO_1000049308" description="Small ribosomal subunit protein bS16">
    <location>
        <begin position="1"/>
        <end position="124"/>
    </location>
</feature>
<feature type="region of interest" description="Disordered" evidence="2">
    <location>
        <begin position="84"/>
        <end position="124"/>
    </location>
</feature>
<feature type="compositionally biased region" description="Basic and acidic residues" evidence="2">
    <location>
        <begin position="84"/>
        <end position="110"/>
    </location>
</feature>
<feature type="compositionally biased region" description="Low complexity" evidence="2">
    <location>
        <begin position="111"/>
        <end position="124"/>
    </location>
</feature>
<proteinExistence type="inferred from homology"/>
<accession>A1B8V3</accession>
<keyword id="KW-1185">Reference proteome</keyword>
<keyword id="KW-0687">Ribonucleoprotein</keyword>
<keyword id="KW-0689">Ribosomal protein</keyword>
<dbReference type="EMBL" id="CP000490">
    <property type="protein sequence ID" value="ABL71947.1"/>
    <property type="molecule type" value="Genomic_DNA"/>
</dbReference>
<dbReference type="RefSeq" id="WP_011750114.1">
    <property type="nucleotide sequence ID" value="NC_008687.1"/>
</dbReference>
<dbReference type="SMR" id="A1B8V3"/>
<dbReference type="STRING" id="318586.Pden_3881"/>
<dbReference type="EnsemblBacteria" id="ABL71947">
    <property type="protein sequence ID" value="ABL71947"/>
    <property type="gene ID" value="Pden_3881"/>
</dbReference>
<dbReference type="GeneID" id="93453541"/>
<dbReference type="KEGG" id="pde:Pden_3881"/>
<dbReference type="eggNOG" id="COG0228">
    <property type="taxonomic scope" value="Bacteria"/>
</dbReference>
<dbReference type="HOGENOM" id="CLU_100590_3_1_5"/>
<dbReference type="OrthoDB" id="9807878at2"/>
<dbReference type="Proteomes" id="UP000000361">
    <property type="component" value="Chromosome 2"/>
</dbReference>
<dbReference type="GO" id="GO:0005737">
    <property type="term" value="C:cytoplasm"/>
    <property type="evidence" value="ECO:0007669"/>
    <property type="project" value="UniProtKB-ARBA"/>
</dbReference>
<dbReference type="GO" id="GO:0015935">
    <property type="term" value="C:small ribosomal subunit"/>
    <property type="evidence" value="ECO:0007669"/>
    <property type="project" value="TreeGrafter"/>
</dbReference>
<dbReference type="GO" id="GO:0003735">
    <property type="term" value="F:structural constituent of ribosome"/>
    <property type="evidence" value="ECO:0007669"/>
    <property type="project" value="InterPro"/>
</dbReference>
<dbReference type="GO" id="GO:0006412">
    <property type="term" value="P:translation"/>
    <property type="evidence" value="ECO:0007669"/>
    <property type="project" value="UniProtKB-UniRule"/>
</dbReference>
<dbReference type="Gene3D" id="3.30.1320.10">
    <property type="match status" value="1"/>
</dbReference>
<dbReference type="HAMAP" id="MF_00385">
    <property type="entry name" value="Ribosomal_bS16"/>
    <property type="match status" value="1"/>
</dbReference>
<dbReference type="InterPro" id="IPR000307">
    <property type="entry name" value="Ribosomal_bS16"/>
</dbReference>
<dbReference type="InterPro" id="IPR023803">
    <property type="entry name" value="Ribosomal_bS16_dom_sf"/>
</dbReference>
<dbReference type="NCBIfam" id="TIGR00002">
    <property type="entry name" value="S16"/>
    <property type="match status" value="1"/>
</dbReference>
<dbReference type="PANTHER" id="PTHR12919">
    <property type="entry name" value="30S RIBOSOMAL PROTEIN S16"/>
    <property type="match status" value="1"/>
</dbReference>
<dbReference type="PANTHER" id="PTHR12919:SF20">
    <property type="entry name" value="SMALL RIBOSOMAL SUBUNIT PROTEIN BS16M"/>
    <property type="match status" value="1"/>
</dbReference>
<dbReference type="Pfam" id="PF00886">
    <property type="entry name" value="Ribosomal_S16"/>
    <property type="match status" value="1"/>
</dbReference>
<dbReference type="SUPFAM" id="SSF54565">
    <property type="entry name" value="Ribosomal protein S16"/>
    <property type="match status" value="1"/>
</dbReference>
<organism>
    <name type="scientific">Paracoccus denitrificans (strain Pd 1222)</name>
    <dbReference type="NCBI Taxonomy" id="318586"/>
    <lineage>
        <taxon>Bacteria</taxon>
        <taxon>Pseudomonadati</taxon>
        <taxon>Pseudomonadota</taxon>
        <taxon>Alphaproteobacteria</taxon>
        <taxon>Rhodobacterales</taxon>
        <taxon>Paracoccaceae</taxon>
        <taxon>Paracoccus</taxon>
    </lineage>
</organism>
<evidence type="ECO:0000255" key="1">
    <source>
        <dbReference type="HAMAP-Rule" id="MF_00385"/>
    </source>
</evidence>
<evidence type="ECO:0000256" key="2">
    <source>
        <dbReference type="SAM" id="MobiDB-lite"/>
    </source>
</evidence>
<evidence type="ECO:0000305" key="3"/>
<reference key="1">
    <citation type="submission" date="2006-12" db="EMBL/GenBank/DDBJ databases">
        <title>Complete sequence of chromosome 2 of Paracoccus denitrificans PD1222.</title>
        <authorList>
            <person name="Copeland A."/>
            <person name="Lucas S."/>
            <person name="Lapidus A."/>
            <person name="Barry K."/>
            <person name="Detter J.C."/>
            <person name="Glavina del Rio T."/>
            <person name="Hammon N."/>
            <person name="Israni S."/>
            <person name="Dalin E."/>
            <person name="Tice H."/>
            <person name="Pitluck S."/>
            <person name="Munk A.C."/>
            <person name="Brettin T."/>
            <person name="Bruce D."/>
            <person name="Han C."/>
            <person name="Tapia R."/>
            <person name="Gilna P."/>
            <person name="Schmutz J."/>
            <person name="Larimer F."/>
            <person name="Land M."/>
            <person name="Hauser L."/>
            <person name="Kyrpides N."/>
            <person name="Lykidis A."/>
            <person name="Spiro S."/>
            <person name="Richardson D.J."/>
            <person name="Moir J.W.B."/>
            <person name="Ferguson S.J."/>
            <person name="van Spanning R.J.M."/>
            <person name="Richardson P."/>
        </authorList>
    </citation>
    <scope>NUCLEOTIDE SEQUENCE [LARGE SCALE GENOMIC DNA]</scope>
    <source>
        <strain>Pd 1222</strain>
    </source>
</reference>
<comment type="similarity">
    <text evidence="1">Belongs to the bacterial ribosomal protein bS16 family.</text>
</comment>
<sequence>MAMKIRLARGGSKKRPHYAIVASDSRMPRDGRFIEKLGTYNPLLPKDSEDRIKMNLERVQYWLGQGAQPTDRVARFLEAAGVKEKAERKNLKKGEPGKAAKERAEKRAAREAAANAPAEEAASE</sequence>
<protein>
    <recommendedName>
        <fullName evidence="1">Small ribosomal subunit protein bS16</fullName>
    </recommendedName>
    <alternativeName>
        <fullName evidence="3">30S ribosomal protein S16</fullName>
    </alternativeName>
</protein>
<name>RS16_PARDP</name>